<protein>
    <recommendedName>
        <fullName>Uncharacterized protein HI_0930</fullName>
    </recommendedName>
</protein>
<gene>
    <name type="ordered locus">HI_0930</name>
</gene>
<organism>
    <name type="scientific">Haemophilus influenzae (strain ATCC 51907 / DSM 11121 / KW20 / Rd)</name>
    <dbReference type="NCBI Taxonomy" id="71421"/>
    <lineage>
        <taxon>Bacteria</taxon>
        <taxon>Pseudomonadati</taxon>
        <taxon>Pseudomonadota</taxon>
        <taxon>Gammaproteobacteria</taxon>
        <taxon>Pasteurellales</taxon>
        <taxon>Pasteurellaceae</taxon>
        <taxon>Haemophilus</taxon>
    </lineage>
</organism>
<accession>P44077</accession>
<dbReference type="EMBL" id="L42023">
    <property type="protein sequence ID" value="AAC22600.1"/>
    <property type="molecule type" value="Genomic_DNA"/>
</dbReference>
<dbReference type="PIR" id="E64016">
    <property type="entry name" value="E64016"/>
</dbReference>
<dbReference type="RefSeq" id="NP_439090.1">
    <property type="nucleotide sequence ID" value="NC_000907.1"/>
</dbReference>
<dbReference type="STRING" id="71421.HI_0930"/>
<dbReference type="EnsemblBacteria" id="AAC22600">
    <property type="protein sequence ID" value="AAC22600"/>
    <property type="gene ID" value="HI_0930"/>
</dbReference>
<dbReference type="KEGG" id="hin:HI_0930"/>
<dbReference type="PATRIC" id="fig|71421.8.peg.971"/>
<dbReference type="eggNOG" id="ENOG502ZWUF">
    <property type="taxonomic scope" value="Bacteria"/>
</dbReference>
<dbReference type="HOGENOM" id="CLU_1407032_0_0_6"/>
<dbReference type="OrthoDB" id="5678341at2"/>
<dbReference type="BioCyc" id="HINF71421:G1GJ1-970-MONOMER"/>
<dbReference type="Proteomes" id="UP000000579">
    <property type="component" value="Chromosome"/>
</dbReference>
<dbReference type="PROSITE" id="PS51257">
    <property type="entry name" value="PROKAR_LIPOPROTEIN"/>
    <property type="match status" value="1"/>
</dbReference>
<keyword id="KW-1185">Reference proteome</keyword>
<reference key="1">
    <citation type="journal article" date="1995" name="Science">
        <title>Whole-genome random sequencing and assembly of Haemophilus influenzae Rd.</title>
        <authorList>
            <person name="Fleischmann R.D."/>
            <person name="Adams M.D."/>
            <person name="White O."/>
            <person name="Clayton R.A."/>
            <person name="Kirkness E.F."/>
            <person name="Kerlavage A.R."/>
            <person name="Bult C.J."/>
            <person name="Tomb J.-F."/>
            <person name="Dougherty B.A."/>
            <person name="Merrick J.M."/>
            <person name="McKenney K."/>
            <person name="Sutton G.G."/>
            <person name="FitzHugh W."/>
            <person name="Fields C.A."/>
            <person name="Gocayne J.D."/>
            <person name="Scott J.D."/>
            <person name="Shirley R."/>
            <person name="Liu L.-I."/>
            <person name="Glodek A."/>
            <person name="Kelley J.M."/>
            <person name="Weidman J.F."/>
            <person name="Phillips C.A."/>
            <person name="Spriggs T."/>
            <person name="Hedblom E."/>
            <person name="Cotton M.D."/>
            <person name="Utterback T.R."/>
            <person name="Hanna M.C."/>
            <person name="Nguyen D.T."/>
            <person name="Saudek D.M."/>
            <person name="Brandon R.C."/>
            <person name="Fine L.D."/>
            <person name="Fritchman J.L."/>
            <person name="Fuhrmann J.L."/>
            <person name="Geoghagen N.S.M."/>
            <person name="Gnehm C.L."/>
            <person name="McDonald L.A."/>
            <person name="Small K.V."/>
            <person name="Fraser C.M."/>
            <person name="Smith H.O."/>
            <person name="Venter J.C."/>
        </authorList>
    </citation>
    <scope>NUCLEOTIDE SEQUENCE [LARGE SCALE GENOMIC DNA]</scope>
    <source>
        <strain>ATCC 51907 / DSM 11121 / KW20 / Rd</strain>
    </source>
</reference>
<sequence length="206" mass="21841">MARRKNHSIKIENNEKENQILVSLSIVALLGGCSEEQVQRDVYQSLDDCLADWKKIELCEADKNTESTQKTATTQQQGLGLNIRDNGNAESAVKNPAENNAQANQSENRAESTTKAESTDPSLGAAIAGGVIGYMAARAISSFLGPSYHPGNRAVTTPTGQVVQPQTNRSVGKPMLVKGNAGSMNSKPVSRGGFSSPNKTHRSSGG</sequence>
<evidence type="ECO:0000256" key="1">
    <source>
        <dbReference type="SAM" id="MobiDB-lite"/>
    </source>
</evidence>
<proteinExistence type="predicted"/>
<feature type="chain" id="PRO_0000077976" description="Uncharacterized protein HI_0930">
    <location>
        <begin position="1"/>
        <end position="206"/>
    </location>
</feature>
<feature type="region of interest" description="Disordered" evidence="1">
    <location>
        <begin position="64"/>
        <end position="123"/>
    </location>
</feature>
<feature type="region of interest" description="Disordered" evidence="1">
    <location>
        <begin position="155"/>
        <end position="206"/>
    </location>
</feature>
<feature type="compositionally biased region" description="Polar residues" evidence="1">
    <location>
        <begin position="66"/>
        <end position="79"/>
    </location>
</feature>
<feature type="compositionally biased region" description="Low complexity" evidence="1">
    <location>
        <begin position="97"/>
        <end position="107"/>
    </location>
</feature>
<feature type="compositionally biased region" description="Basic and acidic residues" evidence="1">
    <location>
        <begin position="108"/>
        <end position="118"/>
    </location>
</feature>
<feature type="compositionally biased region" description="Low complexity" evidence="1">
    <location>
        <begin position="155"/>
        <end position="167"/>
    </location>
</feature>
<feature type="compositionally biased region" description="Polar residues" evidence="1">
    <location>
        <begin position="182"/>
        <end position="198"/>
    </location>
</feature>
<name>Y930_HAEIN</name>